<protein>
    <recommendedName>
        <fullName evidence="1">ATP-dependent Clp protease ATP-binding subunit ClpX 3</fullName>
    </recommendedName>
</protein>
<proteinExistence type="inferred from homology"/>
<keyword id="KW-0067">ATP-binding</keyword>
<keyword id="KW-0143">Chaperone</keyword>
<keyword id="KW-0479">Metal-binding</keyword>
<keyword id="KW-0547">Nucleotide-binding</keyword>
<keyword id="KW-1185">Reference proteome</keyword>
<keyword id="KW-0862">Zinc</keyword>
<comment type="function">
    <text evidence="1">ATP-dependent specificity component of the Clp protease. It directs the protease to specific substrates. Can perform chaperone functions in the absence of ClpP.</text>
</comment>
<comment type="subunit">
    <text evidence="1">Component of the ClpX-ClpP complex. Forms a hexameric ring that, in the presence of ATP, binds to fourteen ClpP subunits assembled into a disk-like structure with a central cavity, resembling the structure of eukaryotic proteasomes.</text>
</comment>
<comment type="similarity">
    <text evidence="1">Belongs to the ClpX chaperone family.</text>
</comment>
<comment type="sequence caution" evidence="3">
    <conflict type="erroneous initiation">
        <sequence resource="EMBL-CDS" id="AAU92118"/>
    </conflict>
</comment>
<organism>
    <name type="scientific">Methylococcus capsulatus (strain ATCC 33009 / NCIMB 11132 / Bath)</name>
    <dbReference type="NCBI Taxonomy" id="243233"/>
    <lineage>
        <taxon>Bacteria</taxon>
        <taxon>Pseudomonadati</taxon>
        <taxon>Pseudomonadota</taxon>
        <taxon>Gammaproteobacteria</taxon>
        <taxon>Methylococcales</taxon>
        <taxon>Methylococcaceae</taxon>
        <taxon>Methylococcus</taxon>
    </lineage>
</organism>
<sequence>MSSDPPAKTQHCSFCGIEQGRDTPLIAGIEGQICEACVRLAEQVVANWGRKRSMAELHGNVPKPEDIKRHLDQYVIGQELAKEILSVAVYNHYKRLRHESREILGLAGSDTEVQVGKSNILMIGPTGTGKTLLASTLARIVGVPFVVADATTLTQAGYVGDDVENILVRLLEAADGSVERAEWGIVYIDEVDKLAKSPEMAINTRDISGEGVQQALLRFVEGSQVKVAARGRRREGSGGGEEVTIDTRNILFIAGGAFPGLERHVEKRIGPPRGEIGFHAPVQDAKRPLLEELLAEIQPEDLRRFGLIPEFIGRFPVIAPLEPLDEAAFVRILTEPRDALVRQYQKLFAYEGVELVFTEPAIRRIAARTIERDTGARGLRSIIEHILRRPMFEIPSQSDVRQCVVDADTVDGKAPVTLVRAEEEAGGARLAAGEV</sequence>
<gene>
    <name evidence="1" type="primary">clpX3</name>
    <name type="synonym">clpX-3</name>
    <name type="ordered locus">MCA1829</name>
</gene>
<feature type="chain" id="PRO_0000160384" description="ATP-dependent Clp protease ATP-binding subunit ClpX 3">
    <location>
        <begin position="1"/>
        <end position="435"/>
    </location>
</feature>
<feature type="domain" description="ClpX-type ZB" evidence="2">
    <location>
        <begin position="1"/>
        <end position="53"/>
    </location>
</feature>
<feature type="binding site" evidence="2">
    <location>
        <position position="12"/>
    </location>
    <ligand>
        <name>Zn(2+)</name>
        <dbReference type="ChEBI" id="CHEBI:29105"/>
    </ligand>
</feature>
<feature type="binding site" evidence="2">
    <location>
        <position position="15"/>
    </location>
    <ligand>
        <name>Zn(2+)</name>
        <dbReference type="ChEBI" id="CHEBI:29105"/>
    </ligand>
</feature>
<feature type="binding site" evidence="2">
    <location>
        <position position="34"/>
    </location>
    <ligand>
        <name>Zn(2+)</name>
        <dbReference type="ChEBI" id="CHEBI:29105"/>
    </ligand>
</feature>
<feature type="binding site" evidence="2">
    <location>
        <position position="37"/>
    </location>
    <ligand>
        <name>Zn(2+)</name>
        <dbReference type="ChEBI" id="CHEBI:29105"/>
    </ligand>
</feature>
<feature type="binding site" evidence="1">
    <location>
        <begin position="125"/>
        <end position="132"/>
    </location>
    <ligand>
        <name>ATP</name>
        <dbReference type="ChEBI" id="CHEBI:30616"/>
    </ligand>
</feature>
<name>CLPX3_METCA</name>
<evidence type="ECO:0000255" key="1">
    <source>
        <dbReference type="HAMAP-Rule" id="MF_00175"/>
    </source>
</evidence>
<evidence type="ECO:0000255" key="2">
    <source>
        <dbReference type="PROSITE-ProRule" id="PRU01250"/>
    </source>
</evidence>
<evidence type="ECO:0000305" key="3"/>
<reference key="1">
    <citation type="journal article" date="2004" name="PLoS Biol.">
        <title>Genomic insights into methanotrophy: the complete genome sequence of Methylococcus capsulatus (Bath).</title>
        <authorList>
            <person name="Ward N.L."/>
            <person name="Larsen O."/>
            <person name="Sakwa J."/>
            <person name="Bruseth L."/>
            <person name="Khouri H.M."/>
            <person name="Durkin A.S."/>
            <person name="Dimitrov G."/>
            <person name="Jiang L."/>
            <person name="Scanlan D."/>
            <person name="Kang K.H."/>
            <person name="Lewis M.R."/>
            <person name="Nelson K.E."/>
            <person name="Methe B.A."/>
            <person name="Wu M."/>
            <person name="Heidelberg J.F."/>
            <person name="Paulsen I.T."/>
            <person name="Fouts D.E."/>
            <person name="Ravel J."/>
            <person name="Tettelin H."/>
            <person name="Ren Q."/>
            <person name="Read T.D."/>
            <person name="DeBoy R.T."/>
            <person name="Seshadri R."/>
            <person name="Salzberg S.L."/>
            <person name="Jensen H.B."/>
            <person name="Birkeland N.K."/>
            <person name="Nelson W.C."/>
            <person name="Dodson R.J."/>
            <person name="Grindhaug S.H."/>
            <person name="Holt I.E."/>
            <person name="Eidhammer I."/>
            <person name="Jonasen I."/>
            <person name="Vanaken S."/>
            <person name="Utterback T.R."/>
            <person name="Feldblyum T.V."/>
            <person name="Fraser C.M."/>
            <person name="Lillehaug J.R."/>
            <person name="Eisen J.A."/>
        </authorList>
    </citation>
    <scope>NUCLEOTIDE SEQUENCE [LARGE SCALE GENOMIC DNA]</scope>
    <source>
        <strain>ATCC 33009 / NCIMB 11132 / Bath</strain>
    </source>
</reference>
<dbReference type="EMBL" id="AE017282">
    <property type="protein sequence ID" value="AAU92118.1"/>
    <property type="status" value="ALT_INIT"/>
    <property type="molecule type" value="Genomic_DNA"/>
</dbReference>
<dbReference type="SMR" id="Q607D1"/>
<dbReference type="STRING" id="243233.MCA1829"/>
<dbReference type="KEGG" id="mca:MCA1829"/>
<dbReference type="eggNOG" id="COG1219">
    <property type="taxonomic scope" value="Bacteria"/>
</dbReference>
<dbReference type="HOGENOM" id="CLU_014218_8_2_6"/>
<dbReference type="Proteomes" id="UP000006821">
    <property type="component" value="Chromosome"/>
</dbReference>
<dbReference type="GO" id="GO:0005524">
    <property type="term" value="F:ATP binding"/>
    <property type="evidence" value="ECO:0007669"/>
    <property type="project" value="UniProtKB-UniRule"/>
</dbReference>
<dbReference type="GO" id="GO:0016887">
    <property type="term" value="F:ATP hydrolysis activity"/>
    <property type="evidence" value="ECO:0007669"/>
    <property type="project" value="InterPro"/>
</dbReference>
<dbReference type="GO" id="GO:0140662">
    <property type="term" value="F:ATP-dependent protein folding chaperone"/>
    <property type="evidence" value="ECO:0007669"/>
    <property type="project" value="InterPro"/>
</dbReference>
<dbReference type="GO" id="GO:0046983">
    <property type="term" value="F:protein dimerization activity"/>
    <property type="evidence" value="ECO:0007669"/>
    <property type="project" value="InterPro"/>
</dbReference>
<dbReference type="GO" id="GO:0051082">
    <property type="term" value="F:unfolded protein binding"/>
    <property type="evidence" value="ECO:0007669"/>
    <property type="project" value="UniProtKB-UniRule"/>
</dbReference>
<dbReference type="GO" id="GO:0008270">
    <property type="term" value="F:zinc ion binding"/>
    <property type="evidence" value="ECO:0007669"/>
    <property type="project" value="InterPro"/>
</dbReference>
<dbReference type="GO" id="GO:0051603">
    <property type="term" value="P:proteolysis involved in protein catabolic process"/>
    <property type="evidence" value="ECO:0007669"/>
    <property type="project" value="TreeGrafter"/>
</dbReference>
<dbReference type="CDD" id="cd19497">
    <property type="entry name" value="RecA-like_ClpX"/>
    <property type="match status" value="1"/>
</dbReference>
<dbReference type="FunFam" id="1.10.8.60:FF:000002">
    <property type="entry name" value="ATP-dependent Clp protease ATP-binding subunit ClpX"/>
    <property type="match status" value="1"/>
</dbReference>
<dbReference type="Gene3D" id="1.10.8.60">
    <property type="match status" value="1"/>
</dbReference>
<dbReference type="Gene3D" id="6.20.220.10">
    <property type="entry name" value="ClpX chaperone, C4-type zinc finger domain"/>
    <property type="match status" value="1"/>
</dbReference>
<dbReference type="Gene3D" id="3.40.50.300">
    <property type="entry name" value="P-loop containing nucleotide triphosphate hydrolases"/>
    <property type="match status" value="1"/>
</dbReference>
<dbReference type="HAMAP" id="MF_00175">
    <property type="entry name" value="ClpX"/>
    <property type="match status" value="1"/>
</dbReference>
<dbReference type="InterPro" id="IPR003593">
    <property type="entry name" value="AAA+_ATPase"/>
</dbReference>
<dbReference type="InterPro" id="IPR050052">
    <property type="entry name" value="ATP-dep_Clp_protease_ClpX"/>
</dbReference>
<dbReference type="InterPro" id="IPR003959">
    <property type="entry name" value="ATPase_AAA_core"/>
</dbReference>
<dbReference type="InterPro" id="IPR019489">
    <property type="entry name" value="Clp_ATPase_C"/>
</dbReference>
<dbReference type="InterPro" id="IPR004487">
    <property type="entry name" value="Clp_protease_ATP-bd_su_ClpX"/>
</dbReference>
<dbReference type="InterPro" id="IPR046425">
    <property type="entry name" value="ClpX_bact"/>
</dbReference>
<dbReference type="InterPro" id="IPR027417">
    <property type="entry name" value="P-loop_NTPase"/>
</dbReference>
<dbReference type="InterPro" id="IPR010603">
    <property type="entry name" value="Znf_CppX_C4"/>
</dbReference>
<dbReference type="InterPro" id="IPR038366">
    <property type="entry name" value="Znf_CppX_C4_sf"/>
</dbReference>
<dbReference type="NCBIfam" id="TIGR00382">
    <property type="entry name" value="clpX"/>
    <property type="match status" value="1"/>
</dbReference>
<dbReference type="NCBIfam" id="NF003745">
    <property type="entry name" value="PRK05342.1"/>
    <property type="match status" value="1"/>
</dbReference>
<dbReference type="PANTHER" id="PTHR48102:SF7">
    <property type="entry name" value="ATP-DEPENDENT CLP PROTEASE ATP-BINDING SUBUNIT CLPX-LIKE, MITOCHONDRIAL"/>
    <property type="match status" value="1"/>
</dbReference>
<dbReference type="PANTHER" id="PTHR48102">
    <property type="entry name" value="ATP-DEPENDENT CLP PROTEASE ATP-BINDING SUBUNIT CLPX-LIKE, MITOCHONDRIAL-RELATED"/>
    <property type="match status" value="1"/>
</dbReference>
<dbReference type="Pfam" id="PF07724">
    <property type="entry name" value="AAA_2"/>
    <property type="match status" value="1"/>
</dbReference>
<dbReference type="Pfam" id="PF10431">
    <property type="entry name" value="ClpB_D2-small"/>
    <property type="match status" value="1"/>
</dbReference>
<dbReference type="Pfam" id="PF06689">
    <property type="entry name" value="zf-C4_ClpX"/>
    <property type="match status" value="1"/>
</dbReference>
<dbReference type="SMART" id="SM00382">
    <property type="entry name" value="AAA"/>
    <property type="match status" value="1"/>
</dbReference>
<dbReference type="SMART" id="SM01086">
    <property type="entry name" value="ClpB_D2-small"/>
    <property type="match status" value="1"/>
</dbReference>
<dbReference type="SMART" id="SM00994">
    <property type="entry name" value="zf-C4_ClpX"/>
    <property type="match status" value="1"/>
</dbReference>
<dbReference type="SUPFAM" id="SSF57716">
    <property type="entry name" value="Glucocorticoid receptor-like (DNA-binding domain)"/>
    <property type="match status" value="1"/>
</dbReference>
<dbReference type="SUPFAM" id="SSF52540">
    <property type="entry name" value="P-loop containing nucleoside triphosphate hydrolases"/>
    <property type="match status" value="1"/>
</dbReference>
<dbReference type="PROSITE" id="PS51902">
    <property type="entry name" value="CLPX_ZB"/>
    <property type="match status" value="1"/>
</dbReference>
<accession>Q607D1</accession>